<organism>
    <name type="scientific">Fusobacterium nucleatum subsp. nucleatum (strain ATCC 25586 / DSM 15643 / BCRC 10681 / CIP 101130 / JCM 8532 / KCTC 2640 / LMG 13131 / VPI 4355)</name>
    <dbReference type="NCBI Taxonomy" id="190304"/>
    <lineage>
        <taxon>Bacteria</taxon>
        <taxon>Fusobacteriati</taxon>
        <taxon>Fusobacteriota</taxon>
        <taxon>Fusobacteriia</taxon>
        <taxon>Fusobacteriales</taxon>
        <taxon>Fusobacteriaceae</taxon>
        <taxon>Fusobacterium</taxon>
    </lineage>
</organism>
<accession>Q8RHZ9</accession>
<dbReference type="EC" id="2.7.1.30" evidence="1"/>
<dbReference type="EMBL" id="AE009951">
    <property type="protein sequence ID" value="AAL93938.1"/>
    <property type="molecule type" value="Genomic_DNA"/>
</dbReference>
<dbReference type="RefSeq" id="NP_602639.1">
    <property type="nucleotide sequence ID" value="NC_003454.1"/>
</dbReference>
<dbReference type="RefSeq" id="WP_011015864.1">
    <property type="nucleotide sequence ID" value="NZ_OZ209243.1"/>
</dbReference>
<dbReference type="SMR" id="Q8RHZ9"/>
<dbReference type="FunCoup" id="Q8RHZ9">
    <property type="interactions" value="254"/>
</dbReference>
<dbReference type="STRING" id="190304.FN1839"/>
<dbReference type="PaxDb" id="190304-FN1839"/>
<dbReference type="EnsemblBacteria" id="AAL93938">
    <property type="protein sequence ID" value="AAL93938"/>
    <property type="gene ID" value="FN1839"/>
</dbReference>
<dbReference type="GeneID" id="79783139"/>
<dbReference type="KEGG" id="fnu:FN1839"/>
<dbReference type="PATRIC" id="fig|190304.8.peg.315"/>
<dbReference type="eggNOG" id="COG0554">
    <property type="taxonomic scope" value="Bacteria"/>
</dbReference>
<dbReference type="HOGENOM" id="CLU_009281_2_3_0"/>
<dbReference type="InParanoid" id="Q8RHZ9"/>
<dbReference type="BioCyc" id="FNUC190304:G1FZS-336-MONOMER"/>
<dbReference type="UniPathway" id="UPA00618">
    <property type="reaction ID" value="UER00672"/>
</dbReference>
<dbReference type="Proteomes" id="UP000002521">
    <property type="component" value="Chromosome"/>
</dbReference>
<dbReference type="GO" id="GO:0005829">
    <property type="term" value="C:cytosol"/>
    <property type="evidence" value="ECO:0000318"/>
    <property type="project" value="GO_Central"/>
</dbReference>
<dbReference type="GO" id="GO:0005524">
    <property type="term" value="F:ATP binding"/>
    <property type="evidence" value="ECO:0007669"/>
    <property type="project" value="UniProtKB-UniRule"/>
</dbReference>
<dbReference type="GO" id="GO:0004370">
    <property type="term" value="F:glycerol kinase activity"/>
    <property type="evidence" value="ECO:0000250"/>
    <property type="project" value="UniProtKB"/>
</dbReference>
<dbReference type="GO" id="GO:0019563">
    <property type="term" value="P:glycerol catabolic process"/>
    <property type="evidence" value="ECO:0000318"/>
    <property type="project" value="GO_Central"/>
</dbReference>
<dbReference type="GO" id="GO:0006071">
    <property type="term" value="P:glycerol metabolic process"/>
    <property type="evidence" value="ECO:0000250"/>
    <property type="project" value="UniProtKB"/>
</dbReference>
<dbReference type="GO" id="GO:0006072">
    <property type="term" value="P:glycerol-3-phosphate metabolic process"/>
    <property type="evidence" value="ECO:0007669"/>
    <property type="project" value="InterPro"/>
</dbReference>
<dbReference type="CDD" id="cd07786">
    <property type="entry name" value="FGGY_EcGK_like"/>
    <property type="match status" value="1"/>
</dbReference>
<dbReference type="FunFam" id="3.30.420.40:FF:000007">
    <property type="entry name" value="Glycerol kinase"/>
    <property type="match status" value="1"/>
</dbReference>
<dbReference type="FunFam" id="3.30.420.40:FF:000008">
    <property type="entry name" value="Glycerol kinase"/>
    <property type="match status" value="1"/>
</dbReference>
<dbReference type="Gene3D" id="3.30.420.40">
    <property type="match status" value="2"/>
</dbReference>
<dbReference type="HAMAP" id="MF_00186">
    <property type="entry name" value="Glycerol_kin"/>
    <property type="match status" value="1"/>
</dbReference>
<dbReference type="InterPro" id="IPR043129">
    <property type="entry name" value="ATPase_NBD"/>
</dbReference>
<dbReference type="InterPro" id="IPR000577">
    <property type="entry name" value="Carb_kinase_FGGY"/>
</dbReference>
<dbReference type="InterPro" id="IPR018483">
    <property type="entry name" value="Carb_kinase_FGGY_CS"/>
</dbReference>
<dbReference type="InterPro" id="IPR018485">
    <property type="entry name" value="FGGY_C"/>
</dbReference>
<dbReference type="InterPro" id="IPR018484">
    <property type="entry name" value="FGGY_N"/>
</dbReference>
<dbReference type="InterPro" id="IPR005999">
    <property type="entry name" value="Glycerol_kin"/>
</dbReference>
<dbReference type="NCBIfam" id="TIGR01311">
    <property type="entry name" value="glycerol_kin"/>
    <property type="match status" value="1"/>
</dbReference>
<dbReference type="NCBIfam" id="NF000756">
    <property type="entry name" value="PRK00047.1"/>
    <property type="match status" value="1"/>
</dbReference>
<dbReference type="PANTHER" id="PTHR10196:SF69">
    <property type="entry name" value="GLYCEROL KINASE"/>
    <property type="match status" value="1"/>
</dbReference>
<dbReference type="PANTHER" id="PTHR10196">
    <property type="entry name" value="SUGAR KINASE"/>
    <property type="match status" value="1"/>
</dbReference>
<dbReference type="Pfam" id="PF02782">
    <property type="entry name" value="FGGY_C"/>
    <property type="match status" value="1"/>
</dbReference>
<dbReference type="Pfam" id="PF00370">
    <property type="entry name" value="FGGY_N"/>
    <property type="match status" value="1"/>
</dbReference>
<dbReference type="PIRSF" id="PIRSF000538">
    <property type="entry name" value="GlpK"/>
    <property type="match status" value="1"/>
</dbReference>
<dbReference type="SUPFAM" id="SSF53067">
    <property type="entry name" value="Actin-like ATPase domain"/>
    <property type="match status" value="2"/>
</dbReference>
<dbReference type="PROSITE" id="PS00933">
    <property type="entry name" value="FGGY_KINASES_1"/>
    <property type="match status" value="1"/>
</dbReference>
<dbReference type="PROSITE" id="PS00445">
    <property type="entry name" value="FGGY_KINASES_2"/>
    <property type="match status" value="1"/>
</dbReference>
<gene>
    <name evidence="1" type="primary">glpK</name>
    <name type="ordered locus">FN1839</name>
</gene>
<protein>
    <recommendedName>
        <fullName evidence="1">Glycerol kinase</fullName>
        <ecNumber evidence="1">2.7.1.30</ecNumber>
    </recommendedName>
    <alternativeName>
        <fullName evidence="1">ATP:glycerol 3-phosphotransferase</fullName>
    </alternativeName>
    <alternativeName>
        <fullName evidence="1">Glycerokinase</fullName>
        <shortName evidence="1">GK</shortName>
    </alternativeName>
</protein>
<name>GLPK_FUSNN</name>
<feature type="chain" id="PRO_0000059456" description="Glycerol kinase">
    <location>
        <begin position="1"/>
        <end position="497"/>
    </location>
</feature>
<feature type="binding site" evidence="1">
    <location>
        <position position="11"/>
    </location>
    <ligand>
        <name>ADP</name>
        <dbReference type="ChEBI" id="CHEBI:456216"/>
    </ligand>
</feature>
<feature type="binding site" evidence="1">
    <location>
        <position position="11"/>
    </location>
    <ligand>
        <name>ATP</name>
        <dbReference type="ChEBI" id="CHEBI:30616"/>
    </ligand>
</feature>
<feature type="binding site" evidence="1">
    <location>
        <position position="11"/>
    </location>
    <ligand>
        <name>sn-glycerol 3-phosphate</name>
        <dbReference type="ChEBI" id="CHEBI:57597"/>
    </ligand>
</feature>
<feature type="binding site" evidence="1">
    <location>
        <position position="12"/>
    </location>
    <ligand>
        <name>ATP</name>
        <dbReference type="ChEBI" id="CHEBI:30616"/>
    </ligand>
</feature>
<feature type="binding site" evidence="1">
    <location>
        <position position="13"/>
    </location>
    <ligand>
        <name>ATP</name>
        <dbReference type="ChEBI" id="CHEBI:30616"/>
    </ligand>
</feature>
<feature type="binding site" evidence="1">
    <location>
        <position position="15"/>
    </location>
    <ligand>
        <name>ADP</name>
        <dbReference type="ChEBI" id="CHEBI:456216"/>
    </ligand>
</feature>
<feature type="binding site" evidence="1">
    <location>
        <position position="81"/>
    </location>
    <ligand>
        <name>glycerol</name>
        <dbReference type="ChEBI" id="CHEBI:17754"/>
    </ligand>
</feature>
<feature type="binding site" evidence="1">
    <location>
        <position position="81"/>
    </location>
    <ligand>
        <name>sn-glycerol 3-phosphate</name>
        <dbReference type="ChEBI" id="CHEBI:57597"/>
    </ligand>
</feature>
<feature type="binding site" evidence="1">
    <location>
        <position position="82"/>
    </location>
    <ligand>
        <name>glycerol</name>
        <dbReference type="ChEBI" id="CHEBI:17754"/>
    </ligand>
</feature>
<feature type="binding site" evidence="1">
    <location>
        <position position="82"/>
    </location>
    <ligand>
        <name>sn-glycerol 3-phosphate</name>
        <dbReference type="ChEBI" id="CHEBI:57597"/>
    </ligand>
</feature>
<feature type="binding site" evidence="1">
    <location>
        <position position="134"/>
    </location>
    <ligand>
        <name>glycerol</name>
        <dbReference type="ChEBI" id="CHEBI:17754"/>
    </ligand>
</feature>
<feature type="binding site" evidence="1">
    <location>
        <position position="134"/>
    </location>
    <ligand>
        <name>sn-glycerol 3-phosphate</name>
        <dbReference type="ChEBI" id="CHEBI:57597"/>
    </ligand>
</feature>
<feature type="binding site" evidence="1">
    <location>
        <position position="244"/>
    </location>
    <ligand>
        <name>glycerol</name>
        <dbReference type="ChEBI" id="CHEBI:17754"/>
    </ligand>
</feature>
<feature type="binding site" evidence="1">
    <location>
        <position position="244"/>
    </location>
    <ligand>
        <name>sn-glycerol 3-phosphate</name>
        <dbReference type="ChEBI" id="CHEBI:57597"/>
    </ligand>
</feature>
<feature type="binding site" evidence="1">
    <location>
        <position position="245"/>
    </location>
    <ligand>
        <name>glycerol</name>
        <dbReference type="ChEBI" id="CHEBI:17754"/>
    </ligand>
</feature>
<feature type="binding site" evidence="1">
    <location>
        <position position="266"/>
    </location>
    <ligand>
        <name>ADP</name>
        <dbReference type="ChEBI" id="CHEBI:456216"/>
    </ligand>
</feature>
<feature type="binding site" evidence="1">
    <location>
        <position position="266"/>
    </location>
    <ligand>
        <name>ATP</name>
        <dbReference type="ChEBI" id="CHEBI:30616"/>
    </ligand>
</feature>
<feature type="binding site" evidence="1">
    <location>
        <position position="309"/>
    </location>
    <ligand>
        <name>ADP</name>
        <dbReference type="ChEBI" id="CHEBI:456216"/>
    </ligand>
</feature>
<feature type="binding site" evidence="1">
    <location>
        <position position="309"/>
    </location>
    <ligand>
        <name>ATP</name>
        <dbReference type="ChEBI" id="CHEBI:30616"/>
    </ligand>
</feature>
<feature type="binding site" evidence="1">
    <location>
        <position position="313"/>
    </location>
    <ligand>
        <name>ATP</name>
        <dbReference type="ChEBI" id="CHEBI:30616"/>
    </ligand>
</feature>
<feature type="binding site" evidence="1">
    <location>
        <position position="410"/>
    </location>
    <ligand>
        <name>ADP</name>
        <dbReference type="ChEBI" id="CHEBI:456216"/>
    </ligand>
</feature>
<feature type="binding site" evidence="1">
    <location>
        <position position="410"/>
    </location>
    <ligand>
        <name>ATP</name>
        <dbReference type="ChEBI" id="CHEBI:30616"/>
    </ligand>
</feature>
<feature type="binding site" evidence="1">
    <location>
        <position position="414"/>
    </location>
    <ligand>
        <name>ADP</name>
        <dbReference type="ChEBI" id="CHEBI:456216"/>
    </ligand>
</feature>
<proteinExistence type="inferred from homology"/>
<reference key="1">
    <citation type="journal article" date="2002" name="J. Bacteriol.">
        <title>Genome sequence and analysis of the oral bacterium Fusobacterium nucleatum strain ATCC 25586.</title>
        <authorList>
            <person name="Kapatral V."/>
            <person name="Anderson I."/>
            <person name="Ivanova N."/>
            <person name="Reznik G."/>
            <person name="Los T."/>
            <person name="Lykidis A."/>
            <person name="Bhattacharyya A."/>
            <person name="Bartman A."/>
            <person name="Gardner W."/>
            <person name="Grechkin G."/>
            <person name="Zhu L."/>
            <person name="Vasieva O."/>
            <person name="Chu L."/>
            <person name="Kogan Y."/>
            <person name="Chaga O."/>
            <person name="Goltsman E."/>
            <person name="Bernal A."/>
            <person name="Larsen N."/>
            <person name="D'Souza M."/>
            <person name="Walunas T."/>
            <person name="Pusch G."/>
            <person name="Haselkorn R."/>
            <person name="Fonstein M."/>
            <person name="Kyrpides N.C."/>
            <person name="Overbeek R."/>
        </authorList>
    </citation>
    <scope>NUCLEOTIDE SEQUENCE [LARGE SCALE GENOMIC DNA]</scope>
    <source>
        <strain>ATCC 25586 / DSM 15643 / BCRC 10681 / CIP 101130 / JCM 8532 / KCTC 2640 / LMG 13131 / VPI 4355</strain>
    </source>
</reference>
<sequence length="497" mass="55140">MKYIVALDQGTTSSRAILFDESQNIIGVAQKEFTQIYPNEGWVEHDPMEIWSSQSGVLSEVIARAGISQHDIIALGITNQRETTIVWDKNTGKPVYNAIVWQCRRTAKICDELKEIEGFSDYVKDNTGLLVDAYFSGTKIKWILDNVEGARERAEKGELLFGTVDTWLIWKLTNGKIHATDYTNASRTMLYNIKELKWDEKILETLNIPKSMLPEVKDSSGTFGYANLGGKGGHRIPIAGVAGDQQSALFGQACFEEGESKNTYGTGCFLLMNTGEKFVKSNNGLITTIAIGLNGKVQYALEGSVFVGGASVQWLRDELKLISDSKDTEYFARKVKDSAGVYVVPAFVGLGAPYWDMYARGAILGLTRGANKNHIIRATLESIAYQTKDVLKAMEEDSGIKLNGLKVDGGAAANNFLMEFQADILGESVKRPTVLETTALGAAYLAGLAVGFWENKNEIKQKWVLDKEFTPNMPKEERDKKYAGWLKAVERTKKWEE</sequence>
<comment type="function">
    <text evidence="1">Key enzyme in the regulation of glycerol uptake and metabolism. Catalyzes the phosphorylation of glycerol to yield sn-glycerol 3-phosphate.</text>
</comment>
<comment type="catalytic activity">
    <reaction evidence="1">
        <text>glycerol + ATP = sn-glycerol 3-phosphate + ADP + H(+)</text>
        <dbReference type="Rhea" id="RHEA:21644"/>
        <dbReference type="ChEBI" id="CHEBI:15378"/>
        <dbReference type="ChEBI" id="CHEBI:17754"/>
        <dbReference type="ChEBI" id="CHEBI:30616"/>
        <dbReference type="ChEBI" id="CHEBI:57597"/>
        <dbReference type="ChEBI" id="CHEBI:456216"/>
        <dbReference type="EC" id="2.7.1.30"/>
    </reaction>
</comment>
<comment type="activity regulation">
    <text evidence="1">Inhibited by fructose 1,6-bisphosphate (FBP).</text>
</comment>
<comment type="pathway">
    <text evidence="1">Polyol metabolism; glycerol degradation via glycerol kinase pathway; sn-glycerol 3-phosphate from glycerol: step 1/1.</text>
</comment>
<comment type="similarity">
    <text evidence="1">Belongs to the FGGY kinase family.</text>
</comment>
<evidence type="ECO:0000255" key="1">
    <source>
        <dbReference type="HAMAP-Rule" id="MF_00186"/>
    </source>
</evidence>
<keyword id="KW-0067">ATP-binding</keyword>
<keyword id="KW-0319">Glycerol metabolism</keyword>
<keyword id="KW-0418">Kinase</keyword>
<keyword id="KW-0547">Nucleotide-binding</keyword>
<keyword id="KW-1185">Reference proteome</keyword>
<keyword id="KW-0808">Transferase</keyword>